<sequence>MSGKTKRLMVMAGGTGGHVFPGLAVAHHLMAQGWQVRWLGTADRMEASLVPQHGIEIDFIKISGLRGKGLMAQLTAPIRIYRAVRQAQKIMRDYQPDVVLGMGGYVSGPGGLAAWLCGVPVVLHEQNGIAGLTNRWLARIAKKVLQAFPGAFPNADVVGNPVRTDVLALPLPAVRLSGREGPIRVLVIGGSQGARILNQTLPLVAASLGEQITLWHQVGKGALPEVSQAYQQAGQAGHQVVEFIDDMAAAYAWADVVVCRSGALTVSEVAAAGLPAIFVPFQHKDRQQYWNALPLEKAGAAKIIEQPQFTATSVSSLLAGWDRATLLSMAERARSVAIPDATERVAAEVVAASKSA</sequence>
<proteinExistence type="inferred from homology"/>
<name>MURG_YERPS</name>
<feature type="chain" id="PRO_0000225116" description="UDP-N-acetylglucosamine--N-acetylmuramyl-(pentapeptide) pyrophosphoryl-undecaprenol N-acetylglucosamine transferase">
    <location>
        <begin position="1"/>
        <end position="356"/>
    </location>
</feature>
<feature type="binding site" evidence="1">
    <location>
        <begin position="15"/>
        <end position="17"/>
    </location>
    <ligand>
        <name>UDP-N-acetyl-alpha-D-glucosamine</name>
        <dbReference type="ChEBI" id="CHEBI:57705"/>
    </ligand>
</feature>
<feature type="binding site" evidence="1">
    <location>
        <position position="127"/>
    </location>
    <ligand>
        <name>UDP-N-acetyl-alpha-D-glucosamine</name>
        <dbReference type="ChEBI" id="CHEBI:57705"/>
    </ligand>
</feature>
<feature type="binding site" evidence="1">
    <location>
        <position position="163"/>
    </location>
    <ligand>
        <name>UDP-N-acetyl-alpha-D-glucosamine</name>
        <dbReference type="ChEBI" id="CHEBI:57705"/>
    </ligand>
</feature>
<feature type="binding site" evidence="1">
    <location>
        <position position="191"/>
    </location>
    <ligand>
        <name>UDP-N-acetyl-alpha-D-glucosamine</name>
        <dbReference type="ChEBI" id="CHEBI:57705"/>
    </ligand>
</feature>
<feature type="binding site" evidence="1">
    <location>
        <position position="244"/>
    </location>
    <ligand>
        <name>UDP-N-acetyl-alpha-D-glucosamine</name>
        <dbReference type="ChEBI" id="CHEBI:57705"/>
    </ligand>
</feature>
<feature type="binding site" evidence="1">
    <location>
        <begin position="263"/>
        <end position="268"/>
    </location>
    <ligand>
        <name>UDP-N-acetyl-alpha-D-glucosamine</name>
        <dbReference type="ChEBI" id="CHEBI:57705"/>
    </ligand>
</feature>
<feature type="binding site" evidence="1">
    <location>
        <position position="288"/>
    </location>
    <ligand>
        <name>UDP-N-acetyl-alpha-D-glucosamine</name>
        <dbReference type="ChEBI" id="CHEBI:57705"/>
    </ligand>
</feature>
<gene>
    <name evidence="1" type="primary">murG</name>
    <name type="ordered locus">YPTB0688</name>
</gene>
<reference key="1">
    <citation type="journal article" date="2004" name="Proc. Natl. Acad. Sci. U.S.A.">
        <title>Insights into the evolution of Yersinia pestis through whole-genome comparison with Yersinia pseudotuberculosis.</title>
        <authorList>
            <person name="Chain P.S.G."/>
            <person name="Carniel E."/>
            <person name="Larimer F.W."/>
            <person name="Lamerdin J."/>
            <person name="Stoutland P.O."/>
            <person name="Regala W.M."/>
            <person name="Georgescu A.M."/>
            <person name="Vergez L.M."/>
            <person name="Land M.L."/>
            <person name="Motin V.L."/>
            <person name="Brubaker R.R."/>
            <person name="Fowler J."/>
            <person name="Hinnebusch J."/>
            <person name="Marceau M."/>
            <person name="Medigue C."/>
            <person name="Simonet M."/>
            <person name="Chenal-Francisque V."/>
            <person name="Souza B."/>
            <person name="Dacheux D."/>
            <person name="Elliott J.M."/>
            <person name="Derbise A."/>
            <person name="Hauser L.J."/>
            <person name="Garcia E."/>
        </authorList>
    </citation>
    <scope>NUCLEOTIDE SEQUENCE [LARGE SCALE GENOMIC DNA]</scope>
    <source>
        <strain>IP32953</strain>
    </source>
</reference>
<organism>
    <name type="scientific">Yersinia pseudotuberculosis serotype I (strain IP32953)</name>
    <dbReference type="NCBI Taxonomy" id="273123"/>
    <lineage>
        <taxon>Bacteria</taxon>
        <taxon>Pseudomonadati</taxon>
        <taxon>Pseudomonadota</taxon>
        <taxon>Gammaproteobacteria</taxon>
        <taxon>Enterobacterales</taxon>
        <taxon>Yersiniaceae</taxon>
        <taxon>Yersinia</taxon>
    </lineage>
</organism>
<comment type="function">
    <text evidence="1">Cell wall formation. Catalyzes the transfer of a GlcNAc subunit on undecaprenyl-pyrophosphoryl-MurNAc-pentapeptide (lipid intermediate I) to form undecaprenyl-pyrophosphoryl-MurNAc-(pentapeptide)GlcNAc (lipid intermediate II).</text>
</comment>
<comment type="catalytic activity">
    <reaction evidence="1">
        <text>di-trans,octa-cis-undecaprenyl diphospho-N-acetyl-alpha-D-muramoyl-L-alanyl-D-glutamyl-meso-2,6-diaminopimeloyl-D-alanyl-D-alanine + UDP-N-acetyl-alpha-D-glucosamine = di-trans,octa-cis-undecaprenyl diphospho-[N-acetyl-alpha-D-glucosaminyl-(1-&gt;4)]-N-acetyl-alpha-D-muramoyl-L-alanyl-D-glutamyl-meso-2,6-diaminopimeloyl-D-alanyl-D-alanine + UDP + H(+)</text>
        <dbReference type="Rhea" id="RHEA:31227"/>
        <dbReference type="ChEBI" id="CHEBI:15378"/>
        <dbReference type="ChEBI" id="CHEBI:57705"/>
        <dbReference type="ChEBI" id="CHEBI:58223"/>
        <dbReference type="ChEBI" id="CHEBI:61387"/>
        <dbReference type="ChEBI" id="CHEBI:61388"/>
        <dbReference type="EC" id="2.4.1.227"/>
    </reaction>
</comment>
<comment type="pathway">
    <text evidence="1">Cell wall biogenesis; peptidoglycan biosynthesis.</text>
</comment>
<comment type="subcellular location">
    <subcellularLocation>
        <location evidence="1">Cell inner membrane</location>
        <topology evidence="1">Peripheral membrane protein</topology>
        <orientation evidence="1">Cytoplasmic side</orientation>
    </subcellularLocation>
</comment>
<comment type="similarity">
    <text evidence="1">Belongs to the glycosyltransferase 28 family. MurG subfamily.</text>
</comment>
<protein>
    <recommendedName>
        <fullName evidence="1">UDP-N-acetylglucosamine--N-acetylmuramyl-(pentapeptide) pyrophosphoryl-undecaprenol N-acetylglucosamine transferase</fullName>
        <ecNumber evidence="1">2.4.1.227</ecNumber>
    </recommendedName>
    <alternativeName>
        <fullName evidence="1">Undecaprenyl-PP-MurNAc-pentapeptide-UDPGlcNAc GlcNAc transferase</fullName>
    </alternativeName>
</protein>
<evidence type="ECO:0000255" key="1">
    <source>
        <dbReference type="HAMAP-Rule" id="MF_00033"/>
    </source>
</evidence>
<keyword id="KW-0131">Cell cycle</keyword>
<keyword id="KW-0132">Cell division</keyword>
<keyword id="KW-0997">Cell inner membrane</keyword>
<keyword id="KW-1003">Cell membrane</keyword>
<keyword id="KW-0133">Cell shape</keyword>
<keyword id="KW-0961">Cell wall biogenesis/degradation</keyword>
<keyword id="KW-0328">Glycosyltransferase</keyword>
<keyword id="KW-0472">Membrane</keyword>
<keyword id="KW-0573">Peptidoglycan synthesis</keyword>
<keyword id="KW-0808">Transferase</keyword>
<dbReference type="EC" id="2.4.1.227" evidence="1"/>
<dbReference type="EMBL" id="BX936398">
    <property type="protein sequence ID" value="CAH19928.1"/>
    <property type="molecule type" value="Genomic_DNA"/>
</dbReference>
<dbReference type="RefSeq" id="WP_011191735.1">
    <property type="nucleotide sequence ID" value="NC_006155.1"/>
</dbReference>
<dbReference type="SMR" id="Q66EK5"/>
<dbReference type="CAZy" id="GT28">
    <property type="family name" value="Glycosyltransferase Family 28"/>
</dbReference>
<dbReference type="GeneID" id="49787307"/>
<dbReference type="KEGG" id="ypo:BZ17_1867"/>
<dbReference type="KEGG" id="yps:YPTB0688"/>
<dbReference type="PATRIC" id="fig|273123.14.peg.1981"/>
<dbReference type="UniPathway" id="UPA00219"/>
<dbReference type="Proteomes" id="UP000001011">
    <property type="component" value="Chromosome"/>
</dbReference>
<dbReference type="GO" id="GO:0005886">
    <property type="term" value="C:plasma membrane"/>
    <property type="evidence" value="ECO:0007669"/>
    <property type="project" value="UniProtKB-SubCell"/>
</dbReference>
<dbReference type="GO" id="GO:0051991">
    <property type="term" value="F:UDP-N-acetyl-D-glucosamine:N-acetylmuramoyl-L-alanyl-D-glutamyl-meso-2,6-diaminopimelyl-D-alanyl-D-alanine-diphosphoundecaprenol 4-beta-N-acetylglucosaminlytransferase activity"/>
    <property type="evidence" value="ECO:0007669"/>
    <property type="project" value="RHEA"/>
</dbReference>
<dbReference type="GO" id="GO:0050511">
    <property type="term" value="F:undecaprenyldiphospho-muramoylpentapeptide beta-N-acetylglucosaminyltransferase activity"/>
    <property type="evidence" value="ECO:0007669"/>
    <property type="project" value="UniProtKB-UniRule"/>
</dbReference>
<dbReference type="GO" id="GO:0005975">
    <property type="term" value="P:carbohydrate metabolic process"/>
    <property type="evidence" value="ECO:0007669"/>
    <property type="project" value="InterPro"/>
</dbReference>
<dbReference type="GO" id="GO:0051301">
    <property type="term" value="P:cell division"/>
    <property type="evidence" value="ECO:0007669"/>
    <property type="project" value="UniProtKB-KW"/>
</dbReference>
<dbReference type="GO" id="GO:0071555">
    <property type="term" value="P:cell wall organization"/>
    <property type="evidence" value="ECO:0007669"/>
    <property type="project" value="UniProtKB-KW"/>
</dbReference>
<dbReference type="GO" id="GO:0030259">
    <property type="term" value="P:lipid glycosylation"/>
    <property type="evidence" value="ECO:0007669"/>
    <property type="project" value="UniProtKB-UniRule"/>
</dbReference>
<dbReference type="GO" id="GO:0009252">
    <property type="term" value="P:peptidoglycan biosynthetic process"/>
    <property type="evidence" value="ECO:0007669"/>
    <property type="project" value="UniProtKB-UniRule"/>
</dbReference>
<dbReference type="GO" id="GO:0008360">
    <property type="term" value="P:regulation of cell shape"/>
    <property type="evidence" value="ECO:0007669"/>
    <property type="project" value="UniProtKB-KW"/>
</dbReference>
<dbReference type="CDD" id="cd03785">
    <property type="entry name" value="GT28_MurG"/>
    <property type="match status" value="1"/>
</dbReference>
<dbReference type="FunFam" id="3.40.50.2000:FF:000016">
    <property type="entry name" value="UDP-N-acetylglucosamine--N-acetylmuramyl-(pentapeptide) pyrophosphoryl-undecaprenol N-acetylglucosamine transferase"/>
    <property type="match status" value="1"/>
</dbReference>
<dbReference type="FunFam" id="3.40.50.2000:FF:000018">
    <property type="entry name" value="UDP-N-acetylglucosamine--N-acetylmuramyl-(pentapeptide) pyrophosphoryl-undecaprenol N-acetylglucosamine transferase"/>
    <property type="match status" value="1"/>
</dbReference>
<dbReference type="Gene3D" id="3.40.50.2000">
    <property type="entry name" value="Glycogen Phosphorylase B"/>
    <property type="match status" value="2"/>
</dbReference>
<dbReference type="HAMAP" id="MF_00033">
    <property type="entry name" value="MurG"/>
    <property type="match status" value="1"/>
</dbReference>
<dbReference type="InterPro" id="IPR006009">
    <property type="entry name" value="GlcNAc_MurG"/>
</dbReference>
<dbReference type="InterPro" id="IPR007235">
    <property type="entry name" value="Glyco_trans_28_C"/>
</dbReference>
<dbReference type="InterPro" id="IPR004276">
    <property type="entry name" value="GlycoTrans_28_N"/>
</dbReference>
<dbReference type="NCBIfam" id="TIGR01133">
    <property type="entry name" value="murG"/>
    <property type="match status" value="1"/>
</dbReference>
<dbReference type="PANTHER" id="PTHR21015:SF22">
    <property type="entry name" value="GLYCOSYLTRANSFERASE"/>
    <property type="match status" value="1"/>
</dbReference>
<dbReference type="PANTHER" id="PTHR21015">
    <property type="entry name" value="UDP-N-ACETYLGLUCOSAMINE--N-ACETYLMURAMYL-(PENTAPEPTIDE) PYROPHOSPHORYL-UNDECAPRENOL N-ACETYLGLUCOSAMINE TRANSFERASE 1"/>
    <property type="match status" value="1"/>
</dbReference>
<dbReference type="Pfam" id="PF04101">
    <property type="entry name" value="Glyco_tran_28_C"/>
    <property type="match status" value="1"/>
</dbReference>
<dbReference type="Pfam" id="PF03033">
    <property type="entry name" value="Glyco_transf_28"/>
    <property type="match status" value="1"/>
</dbReference>
<dbReference type="SUPFAM" id="SSF53756">
    <property type="entry name" value="UDP-Glycosyltransferase/glycogen phosphorylase"/>
    <property type="match status" value="1"/>
</dbReference>
<accession>Q66EK5</accession>